<reference key="1">
    <citation type="journal article" date="2001" name="Lancet">
        <title>Whole genome sequencing of meticillin-resistant Staphylococcus aureus.</title>
        <authorList>
            <person name="Kuroda M."/>
            <person name="Ohta T."/>
            <person name="Uchiyama I."/>
            <person name="Baba T."/>
            <person name="Yuzawa H."/>
            <person name="Kobayashi I."/>
            <person name="Cui L."/>
            <person name="Oguchi A."/>
            <person name="Aoki K."/>
            <person name="Nagai Y."/>
            <person name="Lian J.-Q."/>
            <person name="Ito T."/>
            <person name="Kanamori M."/>
            <person name="Matsumaru H."/>
            <person name="Maruyama A."/>
            <person name="Murakami H."/>
            <person name="Hosoyama A."/>
            <person name="Mizutani-Ui Y."/>
            <person name="Takahashi N.K."/>
            <person name="Sawano T."/>
            <person name="Inoue R."/>
            <person name="Kaito C."/>
            <person name="Sekimizu K."/>
            <person name="Hirakawa H."/>
            <person name="Kuhara S."/>
            <person name="Goto S."/>
            <person name="Yabuzaki J."/>
            <person name="Kanehisa M."/>
            <person name="Yamashita A."/>
            <person name="Oshima K."/>
            <person name="Furuya K."/>
            <person name="Yoshino C."/>
            <person name="Shiba T."/>
            <person name="Hattori M."/>
            <person name="Ogasawara N."/>
            <person name="Hayashi H."/>
            <person name="Hiramatsu K."/>
        </authorList>
    </citation>
    <scope>NUCLEOTIDE SEQUENCE [LARGE SCALE GENOMIC DNA]</scope>
    <source>
        <strain>Mu50 / ATCC 700699</strain>
    </source>
</reference>
<sequence length="33" mass="3863">MKKLAVILTLVGGLYYAFKKYQERVNQAPNIEY</sequence>
<dbReference type="EMBL" id="BA000017">
    <property type="status" value="NOT_ANNOTATED_CDS"/>
    <property type="molecule type" value="Genomic_DNA"/>
</dbReference>
<dbReference type="SMR" id="P60875"/>
<dbReference type="Proteomes" id="UP000002481">
    <property type="component" value="Chromosome"/>
</dbReference>
<dbReference type="NCBIfam" id="NF040843">
    <property type="entry name" value="SE2200_fam"/>
    <property type="match status" value="1"/>
</dbReference>
<protein>
    <recommendedName>
        <fullName>Uncharacterized protein SAV2627.1</fullName>
    </recommendedName>
</protein>
<name>Y2627_STAAM</name>
<accession>P60875</accession>
<proteinExistence type="predicted"/>
<organism>
    <name type="scientific">Staphylococcus aureus (strain Mu50 / ATCC 700699)</name>
    <dbReference type="NCBI Taxonomy" id="158878"/>
    <lineage>
        <taxon>Bacteria</taxon>
        <taxon>Bacillati</taxon>
        <taxon>Bacillota</taxon>
        <taxon>Bacilli</taxon>
        <taxon>Bacillales</taxon>
        <taxon>Staphylococcaceae</taxon>
        <taxon>Staphylococcus</taxon>
    </lineage>
</organism>
<feature type="chain" id="PRO_0000215536" description="Uncharacterized protein SAV2627.1">
    <location>
        <begin position="1"/>
        <end position="33"/>
    </location>
</feature>
<gene>
    <name type="ordered locus">SAV2627.1</name>
</gene>